<reference key="1">
    <citation type="journal article" date="2009" name="PLoS ONE">
        <title>Salmonella paratyphi C: genetic divergence from Salmonella choleraesuis and pathogenic convergence with Salmonella typhi.</title>
        <authorList>
            <person name="Liu W.-Q."/>
            <person name="Feng Y."/>
            <person name="Wang Y."/>
            <person name="Zou Q.-H."/>
            <person name="Chen F."/>
            <person name="Guo J.-T."/>
            <person name="Peng Y.-H."/>
            <person name="Jin Y."/>
            <person name="Li Y.-G."/>
            <person name="Hu S.-N."/>
            <person name="Johnston R.N."/>
            <person name="Liu G.-R."/>
            <person name="Liu S.-L."/>
        </authorList>
    </citation>
    <scope>NUCLEOTIDE SEQUENCE [LARGE SCALE GENOMIC DNA]</scope>
    <source>
        <strain>RKS4594</strain>
    </source>
</reference>
<protein>
    <recommendedName>
        <fullName evidence="1">tRNA (guanine-N(1)-)-methyltransferase</fullName>
        <ecNumber evidence="1">2.1.1.228</ecNumber>
    </recommendedName>
    <alternativeName>
        <fullName evidence="1">M1G-methyltransferase</fullName>
    </alternativeName>
    <alternativeName>
        <fullName evidence="1">tRNA [GM37] methyltransferase</fullName>
    </alternativeName>
</protein>
<proteinExistence type="inferred from homology"/>
<comment type="function">
    <text evidence="1">Specifically methylates guanosine-37 in various tRNAs.</text>
</comment>
<comment type="catalytic activity">
    <reaction evidence="1">
        <text>guanosine(37) in tRNA + S-adenosyl-L-methionine = N(1)-methylguanosine(37) in tRNA + S-adenosyl-L-homocysteine + H(+)</text>
        <dbReference type="Rhea" id="RHEA:36899"/>
        <dbReference type="Rhea" id="RHEA-COMP:10145"/>
        <dbReference type="Rhea" id="RHEA-COMP:10147"/>
        <dbReference type="ChEBI" id="CHEBI:15378"/>
        <dbReference type="ChEBI" id="CHEBI:57856"/>
        <dbReference type="ChEBI" id="CHEBI:59789"/>
        <dbReference type="ChEBI" id="CHEBI:73542"/>
        <dbReference type="ChEBI" id="CHEBI:74269"/>
        <dbReference type="EC" id="2.1.1.228"/>
    </reaction>
</comment>
<comment type="subunit">
    <text evidence="1">Homodimer.</text>
</comment>
<comment type="subcellular location">
    <subcellularLocation>
        <location evidence="1">Cytoplasm</location>
    </subcellularLocation>
</comment>
<comment type="similarity">
    <text evidence="1">Belongs to the RNA methyltransferase TrmD family.</text>
</comment>
<organism>
    <name type="scientific">Salmonella paratyphi C (strain RKS4594)</name>
    <dbReference type="NCBI Taxonomy" id="476213"/>
    <lineage>
        <taxon>Bacteria</taxon>
        <taxon>Pseudomonadati</taxon>
        <taxon>Pseudomonadota</taxon>
        <taxon>Gammaproteobacteria</taxon>
        <taxon>Enterobacterales</taxon>
        <taxon>Enterobacteriaceae</taxon>
        <taxon>Salmonella</taxon>
    </lineage>
</organism>
<sequence>MFIGIVSLFPEMFRAITDYGVTGRAVKNGLLNIQSWSPRDFTHDRHRTVDDRPYGGGPGMLMMVQPLRDAIHAAKAAAGEGAKVIYLSPQGRKLDQAGVSELATNQKLILVCGRYEGVDERVIQTEIDEEWSIGDYVLSGGELPAMTLIDSVARFIPGVLGHEASAIEDSFADGLLDCPHYTRPEVLEGMEVPPVLLSGNHAEIRRWRLKQSLGRTWLRRPELLENLALTEEQARLLAEFKTEHAQQQHKHDGMA</sequence>
<dbReference type="EC" id="2.1.1.228" evidence="1"/>
<dbReference type="EMBL" id="CP000857">
    <property type="protein sequence ID" value="ACN46884.1"/>
    <property type="molecule type" value="Genomic_DNA"/>
</dbReference>
<dbReference type="RefSeq" id="WP_000469813.1">
    <property type="nucleotide sequence ID" value="NC_012125.1"/>
</dbReference>
<dbReference type="SMR" id="C0PW17"/>
<dbReference type="KEGG" id="sei:SPC_2785"/>
<dbReference type="HOGENOM" id="CLU_047363_0_1_6"/>
<dbReference type="Proteomes" id="UP000001599">
    <property type="component" value="Chromosome"/>
</dbReference>
<dbReference type="GO" id="GO:0005829">
    <property type="term" value="C:cytosol"/>
    <property type="evidence" value="ECO:0007669"/>
    <property type="project" value="TreeGrafter"/>
</dbReference>
<dbReference type="GO" id="GO:0052906">
    <property type="term" value="F:tRNA (guanine(37)-N1)-methyltransferase activity"/>
    <property type="evidence" value="ECO:0007669"/>
    <property type="project" value="UniProtKB-UniRule"/>
</dbReference>
<dbReference type="GO" id="GO:0002939">
    <property type="term" value="P:tRNA N1-guanine methylation"/>
    <property type="evidence" value="ECO:0007669"/>
    <property type="project" value="TreeGrafter"/>
</dbReference>
<dbReference type="CDD" id="cd18080">
    <property type="entry name" value="TrmD-like"/>
    <property type="match status" value="1"/>
</dbReference>
<dbReference type="FunFam" id="1.10.1270.20:FF:000001">
    <property type="entry name" value="tRNA (guanine-N(1)-)-methyltransferase"/>
    <property type="match status" value="1"/>
</dbReference>
<dbReference type="FunFam" id="3.40.1280.10:FF:000001">
    <property type="entry name" value="tRNA (guanine-N(1)-)-methyltransferase"/>
    <property type="match status" value="1"/>
</dbReference>
<dbReference type="Gene3D" id="3.40.1280.10">
    <property type="match status" value="1"/>
</dbReference>
<dbReference type="Gene3D" id="1.10.1270.20">
    <property type="entry name" value="tRNA(m1g37)methyltransferase, domain 2"/>
    <property type="match status" value="1"/>
</dbReference>
<dbReference type="HAMAP" id="MF_00605">
    <property type="entry name" value="TrmD"/>
    <property type="match status" value="1"/>
</dbReference>
<dbReference type="InterPro" id="IPR029028">
    <property type="entry name" value="Alpha/beta_knot_MTases"/>
</dbReference>
<dbReference type="InterPro" id="IPR023148">
    <property type="entry name" value="tRNA_m1G_MeTrfase_C_sf"/>
</dbReference>
<dbReference type="InterPro" id="IPR002649">
    <property type="entry name" value="tRNA_m1G_MeTrfase_TrmD"/>
</dbReference>
<dbReference type="InterPro" id="IPR029026">
    <property type="entry name" value="tRNA_m1G_MTases_N"/>
</dbReference>
<dbReference type="InterPro" id="IPR016009">
    <property type="entry name" value="tRNA_MeTrfase_TRMD/TRM10"/>
</dbReference>
<dbReference type="NCBIfam" id="NF000648">
    <property type="entry name" value="PRK00026.1"/>
    <property type="match status" value="1"/>
</dbReference>
<dbReference type="NCBIfam" id="TIGR00088">
    <property type="entry name" value="trmD"/>
    <property type="match status" value="1"/>
</dbReference>
<dbReference type="PANTHER" id="PTHR46417">
    <property type="entry name" value="TRNA (GUANINE-N(1)-)-METHYLTRANSFERASE"/>
    <property type="match status" value="1"/>
</dbReference>
<dbReference type="PANTHER" id="PTHR46417:SF1">
    <property type="entry name" value="TRNA (GUANINE-N(1)-)-METHYLTRANSFERASE"/>
    <property type="match status" value="1"/>
</dbReference>
<dbReference type="Pfam" id="PF01746">
    <property type="entry name" value="tRNA_m1G_MT"/>
    <property type="match status" value="1"/>
</dbReference>
<dbReference type="PIRSF" id="PIRSF000386">
    <property type="entry name" value="tRNA_mtase"/>
    <property type="match status" value="1"/>
</dbReference>
<dbReference type="SUPFAM" id="SSF75217">
    <property type="entry name" value="alpha/beta knot"/>
    <property type="match status" value="1"/>
</dbReference>
<feature type="chain" id="PRO_1000198582" description="tRNA (guanine-N(1)-)-methyltransferase">
    <location>
        <begin position="1"/>
        <end position="255"/>
    </location>
</feature>
<feature type="binding site" evidence="1">
    <location>
        <position position="113"/>
    </location>
    <ligand>
        <name>S-adenosyl-L-methionine</name>
        <dbReference type="ChEBI" id="CHEBI:59789"/>
    </ligand>
</feature>
<feature type="binding site" evidence="1">
    <location>
        <begin position="133"/>
        <end position="138"/>
    </location>
    <ligand>
        <name>S-adenosyl-L-methionine</name>
        <dbReference type="ChEBI" id="CHEBI:59789"/>
    </ligand>
</feature>
<name>TRMD_SALPC</name>
<keyword id="KW-0963">Cytoplasm</keyword>
<keyword id="KW-0489">Methyltransferase</keyword>
<keyword id="KW-0949">S-adenosyl-L-methionine</keyword>
<keyword id="KW-0808">Transferase</keyword>
<keyword id="KW-0819">tRNA processing</keyword>
<accession>C0PW17</accession>
<gene>
    <name evidence="1" type="primary">trmD</name>
    <name type="ordered locus">SPC_2785</name>
</gene>
<evidence type="ECO:0000255" key="1">
    <source>
        <dbReference type="HAMAP-Rule" id="MF_00605"/>
    </source>
</evidence>